<organism>
    <name type="scientific">Mus musculus</name>
    <name type="common">Mouse</name>
    <dbReference type="NCBI Taxonomy" id="10090"/>
    <lineage>
        <taxon>Eukaryota</taxon>
        <taxon>Metazoa</taxon>
        <taxon>Chordata</taxon>
        <taxon>Craniata</taxon>
        <taxon>Vertebrata</taxon>
        <taxon>Euteleostomi</taxon>
        <taxon>Mammalia</taxon>
        <taxon>Eutheria</taxon>
        <taxon>Euarchontoglires</taxon>
        <taxon>Glires</taxon>
        <taxon>Rodentia</taxon>
        <taxon>Myomorpha</taxon>
        <taxon>Muroidea</taxon>
        <taxon>Muridae</taxon>
        <taxon>Murinae</taxon>
        <taxon>Mus</taxon>
        <taxon>Mus</taxon>
    </lineage>
</organism>
<sequence>MEASGTDEVDKLKTKFISAWNNMKYSWVLKTKTYFSRNSPVLLLGKCYHFKYEDESKMLPARSGCAIEDHVIAGNVEEFRKDFISRIWLTYREEFPQIEASALTTDCGWGCTLRTGQMLLAQGLILHFLGRAWTWPDALHIENADSDSWTSNTVKKFTASFEASLSGDRELRTPAVSLKETSGKCPDDHAVRNEAYHRKIISWFGDSPVAVFGLHRLIEFGKKSGKKAGDWYGPAVVAHILRKAVEEARHPDLQGLTIYVAQDCTVYNSDVIDKQTDSVTAGDARDKAVIILVPVRLGGERTNTDYLEFVKGVLSLEYCVGIIGGKPKQSYYFAGFQDDSLIYMDPHYCQSFVDVSIKDFPLETFHCPSPKKMSFRKMDPSCTIGFYCRNVQDFERASEEITKMLKISSKEKYPLFTFVNGHSKDFDFTSTAASEEDLFSEDERKNFKRFSTEEFVLL</sequence>
<evidence type="ECO:0000250" key="1">
    <source>
        <dbReference type="UniProtKB" id="Q8BGE6"/>
    </source>
</evidence>
<evidence type="ECO:0000250" key="2">
    <source>
        <dbReference type="UniProtKB" id="Q96DT6"/>
    </source>
</evidence>
<evidence type="ECO:0000250" key="3">
    <source>
        <dbReference type="UniProtKB" id="Q9Y4P1"/>
    </source>
</evidence>
<evidence type="ECO:0000269" key="4">
    <source>
    </source>
</evidence>
<evidence type="ECO:0000269" key="5">
    <source>
    </source>
</evidence>
<evidence type="ECO:0000303" key="6">
    <source>
    </source>
</evidence>
<evidence type="ECO:0000303" key="7">
    <source>
    </source>
</evidence>
<evidence type="ECO:0000305" key="8"/>
<evidence type="ECO:0000312" key="9">
    <source>
        <dbReference type="MGI" id="MGI:2651854"/>
    </source>
</evidence>
<comment type="function">
    <text evidence="2 3">Cysteine protease that plays a key role in autophagy by mediating both proteolytic activation and delipidation of ATG8 family proteins. The protease activity is required for proteolytic activation of ATG8 family proteins: cleaves the C-terminal amino acid of ATG8 proteins MAP1LC3 and GABARAPL2, to reveal a C-terminal glycine (By similarity). Exposure of the glycine at the C-terminus is essential for ATG8 proteins conjugation to phosphatidylethanolamine (PE) and insertion to membranes, which is necessary for autophagy (By similarity). In addition to the protease activity, also mediates delipidation of ATG8 family proteins. Catalyzes delipidation of PE-conjugated forms of ATG8 proteins during macroautophagy. Compared to ATG4B, the major protein for proteolytic activation of ATG8 proteins, shows weaker ability to cleave the C-terminal amino acid of ATG8 proteins, while it displays stronger delipidation activity. In contrast to other members of the family, weakly or not involved in phagophore growth during mitophagy (By similarity).</text>
</comment>
<comment type="catalytic activity">
    <reaction evidence="2">
        <text>[protein]-C-terminal L-amino acid-glycyl-phosphatidylethanolamide + H2O = [protein]-C-terminal L-amino acid-glycine + a 1,2-diacyl-sn-glycero-3-phosphoethanolamine</text>
        <dbReference type="Rhea" id="RHEA:67548"/>
        <dbReference type="Rhea" id="RHEA-COMP:17323"/>
        <dbReference type="Rhea" id="RHEA-COMP:17324"/>
        <dbReference type="ChEBI" id="CHEBI:15377"/>
        <dbReference type="ChEBI" id="CHEBI:64612"/>
        <dbReference type="ChEBI" id="CHEBI:172940"/>
        <dbReference type="ChEBI" id="CHEBI:172941"/>
    </reaction>
    <physiologicalReaction direction="left-to-right" evidence="2">
        <dbReference type="Rhea" id="RHEA:67549"/>
    </physiologicalReaction>
</comment>
<comment type="activity regulation">
    <text evidence="2">Inhibited by N-ethylmaleimide.</text>
</comment>
<comment type="subcellular location">
    <subcellularLocation>
        <location evidence="1">Cytoplasm</location>
    </subcellularLocation>
</comment>
<comment type="similarity">
    <text evidence="8">Belongs to the peptidase C54 family.</text>
</comment>
<comment type="caution">
    <text evidence="4 5 8">Was reported that this protein is required for a proper autophagic response under stressful conditions such as prolonged starvation, based on experiments conducted on cells or mice claimed to have null alleles (PubMed:17442669). However, this paper has been retracted because of aberrations in the relevant figure (PubMed:30808006). Nevertheless, a separate experiment in the same paper suggests that the alleles are null and so the inferred function may be true.</text>
</comment>
<accession>Q811C2</accession>
<accession>B1ASJ9</accession>
<accession>Q6PD25</accession>
<proteinExistence type="evidence at transcript level"/>
<feature type="chain" id="PRO_0000215850" description="Cysteine protease ATG4C">
    <location>
        <begin position="1"/>
        <end position="458"/>
    </location>
</feature>
<feature type="active site" description="Nucleophile" evidence="3">
    <location>
        <position position="111"/>
    </location>
</feature>
<feature type="active site" evidence="3">
    <location>
        <position position="345"/>
    </location>
</feature>
<feature type="active site" evidence="3">
    <location>
        <position position="347"/>
    </location>
</feature>
<feature type="modified residue" description="N-acetylmethionine" evidence="2">
    <location>
        <position position="1"/>
    </location>
</feature>
<feature type="modified residue" description="Phosphoserine" evidence="2">
    <location>
        <position position="451"/>
    </location>
</feature>
<feature type="modified residue" description="Phosphothreonine" evidence="2">
    <location>
        <position position="452"/>
    </location>
</feature>
<feature type="sequence conflict" description="In Ref. 4; AAH58981." evidence="8" ref="4">
    <original>I</original>
    <variation>L</variation>
    <location>
        <position position="87"/>
    </location>
</feature>
<feature type="sequence conflict" description="In Ref. 1; CAC85555." evidence="8" ref="1">
    <original>A</original>
    <variation>T</variation>
    <location>
        <position position="190"/>
    </location>
</feature>
<dbReference type="EC" id="3.4.22.-" evidence="2"/>
<dbReference type="EMBL" id="AJ312233">
    <property type="protein sequence ID" value="CAC85555.1"/>
    <property type="molecule type" value="Genomic_DNA"/>
</dbReference>
<dbReference type="EMBL" id="AL627166">
    <property type="status" value="NOT_ANNOTATED_CDS"/>
    <property type="molecule type" value="Genomic_DNA"/>
</dbReference>
<dbReference type="EMBL" id="BC058981">
    <property type="protein sequence ID" value="AAH58981.1"/>
    <property type="molecule type" value="mRNA"/>
</dbReference>
<dbReference type="CCDS" id="CCDS18382.1"/>
<dbReference type="RefSeq" id="NP_001139439.1">
    <property type="nucleotide sequence ID" value="NM_001145967.1"/>
</dbReference>
<dbReference type="RefSeq" id="NP_778194.3">
    <property type="nucleotide sequence ID" value="NM_175029.3"/>
</dbReference>
<dbReference type="SMR" id="Q811C2"/>
<dbReference type="FunCoup" id="Q811C2">
    <property type="interactions" value="1752"/>
</dbReference>
<dbReference type="STRING" id="10090.ENSMUSP00000030279"/>
<dbReference type="MEROPS" id="C54.004"/>
<dbReference type="iPTMnet" id="Q811C2"/>
<dbReference type="PhosphoSitePlus" id="Q811C2"/>
<dbReference type="PaxDb" id="10090-ENSMUSP00000030279"/>
<dbReference type="PeptideAtlas" id="Q811C2"/>
<dbReference type="ProteomicsDB" id="265148"/>
<dbReference type="Antibodypedia" id="1971">
    <property type="antibodies" value="559 antibodies from 37 providers"/>
</dbReference>
<dbReference type="DNASU" id="242557"/>
<dbReference type="Ensembl" id="ENSMUST00000030279.15">
    <property type="protein sequence ID" value="ENSMUSP00000030279.9"/>
    <property type="gene ID" value="ENSMUSG00000028550.16"/>
</dbReference>
<dbReference type="Ensembl" id="ENSMUST00000180278.2">
    <property type="protein sequence ID" value="ENSMUSP00000137035.2"/>
    <property type="gene ID" value="ENSMUSG00000028550.16"/>
</dbReference>
<dbReference type="GeneID" id="242557"/>
<dbReference type="KEGG" id="mmu:242557"/>
<dbReference type="UCSC" id="uc008tut.1">
    <property type="organism name" value="mouse"/>
</dbReference>
<dbReference type="AGR" id="MGI:2651854"/>
<dbReference type="CTD" id="84938"/>
<dbReference type="MGI" id="MGI:2651854">
    <property type="gene designation" value="Atg4c"/>
</dbReference>
<dbReference type="VEuPathDB" id="HostDB:ENSMUSG00000028550"/>
<dbReference type="eggNOG" id="KOG2674">
    <property type="taxonomic scope" value="Eukaryota"/>
</dbReference>
<dbReference type="GeneTree" id="ENSGT00530000063000"/>
<dbReference type="HOGENOM" id="CLU_021259_3_2_1"/>
<dbReference type="InParanoid" id="Q811C2"/>
<dbReference type="OMA" id="KMAGDWY"/>
<dbReference type="OrthoDB" id="2960936at2759"/>
<dbReference type="PhylomeDB" id="Q811C2"/>
<dbReference type="TreeFam" id="TF314847"/>
<dbReference type="Reactome" id="R-MMU-1632852">
    <property type="pathway name" value="Macroautophagy"/>
</dbReference>
<dbReference type="BioGRID-ORCS" id="242557">
    <property type="hits" value="1 hit in 76 CRISPR screens"/>
</dbReference>
<dbReference type="ChiTaRS" id="Atg4c">
    <property type="organism name" value="mouse"/>
</dbReference>
<dbReference type="PRO" id="PR:Q811C2"/>
<dbReference type="Proteomes" id="UP000000589">
    <property type="component" value="Chromosome 4"/>
</dbReference>
<dbReference type="RNAct" id="Q811C2">
    <property type="molecule type" value="protein"/>
</dbReference>
<dbReference type="Bgee" id="ENSMUSG00000028550">
    <property type="expression patterns" value="Expressed in parotid gland and 225 other cell types or tissues"/>
</dbReference>
<dbReference type="GO" id="GO:0005737">
    <property type="term" value="C:cytoplasm"/>
    <property type="evidence" value="ECO:0007669"/>
    <property type="project" value="UniProtKB-SubCell"/>
</dbReference>
<dbReference type="GO" id="GO:0004197">
    <property type="term" value="F:cysteine-type endopeptidase activity"/>
    <property type="evidence" value="ECO:0007669"/>
    <property type="project" value="Ensembl"/>
</dbReference>
<dbReference type="GO" id="GO:0008234">
    <property type="term" value="F:cysteine-type peptidase activity"/>
    <property type="evidence" value="ECO:0000250"/>
    <property type="project" value="UniProtKB"/>
</dbReference>
<dbReference type="GO" id="GO:0019786">
    <property type="term" value="F:protein-phosphatidylethanolamide deconjugating activity"/>
    <property type="evidence" value="ECO:0007669"/>
    <property type="project" value="InterPro"/>
</dbReference>
<dbReference type="GO" id="GO:0000045">
    <property type="term" value="P:autophagosome assembly"/>
    <property type="evidence" value="ECO:0007669"/>
    <property type="project" value="Ensembl"/>
</dbReference>
<dbReference type="GO" id="GO:0006914">
    <property type="term" value="P:autophagy"/>
    <property type="evidence" value="ECO:0000250"/>
    <property type="project" value="UniProtKB"/>
</dbReference>
<dbReference type="GO" id="GO:0051697">
    <property type="term" value="P:protein delipidation"/>
    <property type="evidence" value="ECO:0000250"/>
    <property type="project" value="UniProtKB"/>
</dbReference>
<dbReference type="GO" id="GO:0015031">
    <property type="term" value="P:protein transport"/>
    <property type="evidence" value="ECO:0007669"/>
    <property type="project" value="UniProtKB-KW"/>
</dbReference>
<dbReference type="GO" id="GO:0006508">
    <property type="term" value="P:proteolysis"/>
    <property type="evidence" value="ECO:0007669"/>
    <property type="project" value="UniProtKB-KW"/>
</dbReference>
<dbReference type="InterPro" id="IPR046793">
    <property type="entry name" value="ATG4_LIR"/>
</dbReference>
<dbReference type="InterPro" id="IPR038765">
    <property type="entry name" value="Papain-like_cys_pep_sf"/>
</dbReference>
<dbReference type="InterPro" id="IPR005078">
    <property type="entry name" value="Peptidase_C54"/>
</dbReference>
<dbReference type="InterPro" id="IPR046792">
    <property type="entry name" value="Peptidase_C54_cat"/>
</dbReference>
<dbReference type="PANTHER" id="PTHR22624">
    <property type="entry name" value="CYSTEINE PROTEASE ATG4"/>
    <property type="match status" value="1"/>
</dbReference>
<dbReference type="PANTHER" id="PTHR22624:SF38">
    <property type="entry name" value="CYSTEINE PROTEASE ATG4C"/>
    <property type="match status" value="1"/>
</dbReference>
<dbReference type="Pfam" id="PF20166">
    <property type="entry name" value="ATG4_LIR"/>
    <property type="match status" value="1"/>
</dbReference>
<dbReference type="Pfam" id="PF03416">
    <property type="entry name" value="Peptidase_C54"/>
    <property type="match status" value="1"/>
</dbReference>
<dbReference type="SUPFAM" id="SSF54001">
    <property type="entry name" value="Cysteine proteinases"/>
    <property type="match status" value="1"/>
</dbReference>
<reference key="1">
    <citation type="journal article" date="2003" name="J. Biol. Chem.">
        <title>Human autophagins, a family of cysteine proteinases potentially implicated in cell degradation by autophagy.</title>
        <authorList>
            <person name="Marino G."/>
            <person name="Uria J.A."/>
            <person name="Puente X.S."/>
            <person name="Quesada V."/>
            <person name="Bordallo J."/>
            <person name="Lopez-Otin C."/>
        </authorList>
    </citation>
    <scope>NUCLEOTIDE SEQUENCE [MRNA]</scope>
    <scope>RETRACTED PAPER</scope>
    <source>
        <tissue>Brain</tissue>
    </source>
</reference>
<reference key="2">
    <citation type="journal article" date="2019" name="J. Biol. Chem.">
        <authorList>
            <person name="Marino G."/>
            <person name="Uria J.A."/>
            <person name="Puente X.S."/>
            <person name="Quesada V."/>
            <person name="Bordallo J."/>
            <person name="Lopez-Otin C."/>
        </authorList>
    </citation>
    <scope>RETRACTION NOTICE OF PUBMED:12446702</scope>
</reference>
<reference key="3">
    <citation type="journal article" date="2009" name="PLoS Biol.">
        <title>Lineage-specific biology revealed by a finished genome assembly of the mouse.</title>
        <authorList>
            <person name="Church D.M."/>
            <person name="Goodstadt L."/>
            <person name="Hillier L.W."/>
            <person name="Zody M.C."/>
            <person name="Goldstein S."/>
            <person name="She X."/>
            <person name="Bult C.J."/>
            <person name="Agarwala R."/>
            <person name="Cherry J.L."/>
            <person name="DiCuccio M."/>
            <person name="Hlavina W."/>
            <person name="Kapustin Y."/>
            <person name="Meric P."/>
            <person name="Maglott D."/>
            <person name="Birtle Z."/>
            <person name="Marques A.C."/>
            <person name="Graves T."/>
            <person name="Zhou S."/>
            <person name="Teague B."/>
            <person name="Potamousis K."/>
            <person name="Churas C."/>
            <person name="Place M."/>
            <person name="Herschleb J."/>
            <person name="Runnheim R."/>
            <person name="Forrest D."/>
            <person name="Amos-Landgraf J."/>
            <person name="Schwartz D.C."/>
            <person name="Cheng Z."/>
            <person name="Lindblad-Toh K."/>
            <person name="Eichler E.E."/>
            <person name="Ponting C.P."/>
        </authorList>
    </citation>
    <scope>NUCLEOTIDE SEQUENCE [LARGE SCALE GENOMIC DNA]</scope>
    <source>
        <strain>C57BL/6J</strain>
    </source>
</reference>
<reference key="4">
    <citation type="journal article" date="2004" name="Genome Res.">
        <title>The status, quality, and expansion of the NIH full-length cDNA project: the Mammalian Gene Collection (MGC).</title>
        <authorList>
            <consortium name="The MGC Project Team"/>
        </authorList>
    </citation>
    <scope>NUCLEOTIDE SEQUENCE [LARGE SCALE MRNA]</scope>
    <source>
        <strain>C57BL/6J</strain>
        <tissue>Brain</tissue>
    </source>
</reference>
<reference key="5">
    <citation type="journal article" date="2007" name="J. Biol. Chem.">
        <title>Tissue-specific autophagy alterations and increased tumorigenesis in mice deficient in Atg4C/autophagin-3.</title>
        <authorList>
            <person name="Marino G."/>
            <person name="Salvador-Montoliu N."/>
            <person name="Fueyo A."/>
            <person name="Knecht E."/>
            <person name="Mizushima N."/>
            <person name="Lopez-Otin C."/>
        </authorList>
    </citation>
    <scope>RETRACTED PAPER</scope>
</reference>
<reference key="6">
    <citation type="journal article" date="2019" name="J. Biol. Chem.">
        <authorList>
            <person name="Marino G."/>
            <person name="Salvador-Montoliu N."/>
            <person name="Fueyo A."/>
            <person name="Knecht E."/>
            <person name="Mizushima N."/>
            <person name="Lopez-Otin C."/>
        </authorList>
    </citation>
    <scope>RETRACTION NOTICE OF PUBMED:17442669</scope>
</reference>
<keyword id="KW-0007">Acetylation</keyword>
<keyword id="KW-0072">Autophagy</keyword>
<keyword id="KW-0963">Cytoplasm</keyword>
<keyword id="KW-0378">Hydrolase</keyword>
<keyword id="KW-0597">Phosphoprotein</keyword>
<keyword id="KW-0645">Protease</keyword>
<keyword id="KW-0653">Protein transport</keyword>
<keyword id="KW-1185">Reference proteome</keyword>
<keyword id="KW-0788">Thiol protease</keyword>
<keyword id="KW-0813">Transport</keyword>
<keyword id="KW-0833">Ubl conjugation pathway</keyword>
<gene>
    <name evidence="7 9" type="primary">Atg4c</name>
    <name type="synonym">Apg4c</name>
    <name type="synonym">Autl3</name>
</gene>
<protein>
    <recommendedName>
        <fullName evidence="8">Cysteine protease ATG4C</fullName>
        <ecNumber evidence="2">3.4.22.-</ecNumber>
    </recommendedName>
    <alternativeName>
        <fullName>AUT-like 3 cysteine endopeptidase</fullName>
    </alternativeName>
    <alternativeName>
        <fullName evidence="6">Autophagy-related cysteine endopeptidase 3</fullName>
        <shortName evidence="6">Autophagin-3</shortName>
    </alternativeName>
    <alternativeName>
        <fullName evidence="7">Autophagy-related protein 4 homolog C</fullName>
    </alternativeName>
</protein>
<name>ATG4C_MOUSE</name>